<evidence type="ECO:0000255" key="1">
    <source>
        <dbReference type="HAMAP-Rule" id="MF_01366"/>
    </source>
</evidence>
<evidence type="ECO:0000305" key="2"/>
<protein>
    <recommendedName>
        <fullName evidence="1">Large ribosomal subunit protein uL13</fullName>
    </recommendedName>
    <alternativeName>
        <fullName evidence="2">50S ribosomal protein L13</fullName>
    </alternativeName>
</protein>
<comment type="function">
    <text evidence="1">This protein is one of the early assembly proteins of the 50S ribosomal subunit, although it is not seen to bind rRNA by itself. It is important during the early stages of 50S assembly.</text>
</comment>
<comment type="subunit">
    <text evidence="1">Part of the 50S ribosomal subunit.</text>
</comment>
<comment type="similarity">
    <text evidence="1">Belongs to the universal ribosomal protein uL13 family.</text>
</comment>
<accession>Q2FES1</accession>
<proteinExistence type="inferred from homology"/>
<reference key="1">
    <citation type="journal article" date="2006" name="Lancet">
        <title>Complete genome sequence of USA300, an epidemic clone of community-acquired meticillin-resistant Staphylococcus aureus.</title>
        <authorList>
            <person name="Diep B.A."/>
            <person name="Gill S.R."/>
            <person name="Chang R.F."/>
            <person name="Phan T.H."/>
            <person name="Chen J.H."/>
            <person name="Davidson M.G."/>
            <person name="Lin F."/>
            <person name="Lin J."/>
            <person name="Carleton H.A."/>
            <person name="Mongodin E.F."/>
            <person name="Sensabaugh G.F."/>
            <person name="Perdreau-Remington F."/>
        </authorList>
    </citation>
    <scope>NUCLEOTIDE SEQUENCE [LARGE SCALE GENOMIC DNA]</scope>
    <source>
        <strain>USA300</strain>
    </source>
</reference>
<dbReference type="EMBL" id="CP000255">
    <property type="protein sequence ID" value="ABD21656.1"/>
    <property type="molecule type" value="Genomic_DNA"/>
</dbReference>
<dbReference type="RefSeq" id="WP_001250038.1">
    <property type="nucleotide sequence ID" value="NZ_CP027476.1"/>
</dbReference>
<dbReference type="SMR" id="Q2FES1"/>
<dbReference type="GeneID" id="98346530"/>
<dbReference type="KEGG" id="saa:SAUSA300_2172"/>
<dbReference type="HOGENOM" id="CLU_082184_2_2_9"/>
<dbReference type="OMA" id="HKPIYTP"/>
<dbReference type="Proteomes" id="UP000001939">
    <property type="component" value="Chromosome"/>
</dbReference>
<dbReference type="GO" id="GO:0022625">
    <property type="term" value="C:cytosolic large ribosomal subunit"/>
    <property type="evidence" value="ECO:0007669"/>
    <property type="project" value="TreeGrafter"/>
</dbReference>
<dbReference type="GO" id="GO:0003729">
    <property type="term" value="F:mRNA binding"/>
    <property type="evidence" value="ECO:0007669"/>
    <property type="project" value="TreeGrafter"/>
</dbReference>
<dbReference type="GO" id="GO:0003735">
    <property type="term" value="F:structural constituent of ribosome"/>
    <property type="evidence" value="ECO:0007669"/>
    <property type="project" value="InterPro"/>
</dbReference>
<dbReference type="GO" id="GO:0017148">
    <property type="term" value="P:negative regulation of translation"/>
    <property type="evidence" value="ECO:0007669"/>
    <property type="project" value="TreeGrafter"/>
</dbReference>
<dbReference type="GO" id="GO:0006412">
    <property type="term" value="P:translation"/>
    <property type="evidence" value="ECO:0007669"/>
    <property type="project" value="UniProtKB-UniRule"/>
</dbReference>
<dbReference type="CDD" id="cd00392">
    <property type="entry name" value="Ribosomal_L13"/>
    <property type="match status" value="1"/>
</dbReference>
<dbReference type="FunFam" id="3.90.1180.10:FF:000001">
    <property type="entry name" value="50S ribosomal protein L13"/>
    <property type="match status" value="1"/>
</dbReference>
<dbReference type="Gene3D" id="3.90.1180.10">
    <property type="entry name" value="Ribosomal protein L13"/>
    <property type="match status" value="1"/>
</dbReference>
<dbReference type="HAMAP" id="MF_01366">
    <property type="entry name" value="Ribosomal_uL13"/>
    <property type="match status" value="1"/>
</dbReference>
<dbReference type="InterPro" id="IPR005822">
    <property type="entry name" value="Ribosomal_uL13"/>
</dbReference>
<dbReference type="InterPro" id="IPR005823">
    <property type="entry name" value="Ribosomal_uL13_bac-type"/>
</dbReference>
<dbReference type="InterPro" id="IPR023563">
    <property type="entry name" value="Ribosomal_uL13_CS"/>
</dbReference>
<dbReference type="InterPro" id="IPR036899">
    <property type="entry name" value="Ribosomal_uL13_sf"/>
</dbReference>
<dbReference type="NCBIfam" id="TIGR01066">
    <property type="entry name" value="rplM_bact"/>
    <property type="match status" value="1"/>
</dbReference>
<dbReference type="PANTHER" id="PTHR11545:SF2">
    <property type="entry name" value="LARGE RIBOSOMAL SUBUNIT PROTEIN UL13M"/>
    <property type="match status" value="1"/>
</dbReference>
<dbReference type="PANTHER" id="PTHR11545">
    <property type="entry name" value="RIBOSOMAL PROTEIN L13"/>
    <property type="match status" value="1"/>
</dbReference>
<dbReference type="Pfam" id="PF00572">
    <property type="entry name" value="Ribosomal_L13"/>
    <property type="match status" value="1"/>
</dbReference>
<dbReference type="PIRSF" id="PIRSF002181">
    <property type="entry name" value="Ribosomal_L13"/>
    <property type="match status" value="1"/>
</dbReference>
<dbReference type="SUPFAM" id="SSF52161">
    <property type="entry name" value="Ribosomal protein L13"/>
    <property type="match status" value="1"/>
</dbReference>
<dbReference type="PROSITE" id="PS00783">
    <property type="entry name" value="RIBOSOMAL_L13"/>
    <property type="match status" value="1"/>
</dbReference>
<organism>
    <name type="scientific">Staphylococcus aureus (strain USA300)</name>
    <dbReference type="NCBI Taxonomy" id="367830"/>
    <lineage>
        <taxon>Bacteria</taxon>
        <taxon>Bacillati</taxon>
        <taxon>Bacillota</taxon>
        <taxon>Bacilli</taxon>
        <taxon>Bacillales</taxon>
        <taxon>Staphylococcaceae</taxon>
        <taxon>Staphylococcus</taxon>
    </lineage>
</organism>
<name>RL13_STAA3</name>
<sequence length="145" mass="16333">MRQTFMANESNIERKWYVIDAEGQTLGRLSSEVASILRGKNKVTYTPHVDTGDYVIVINASKIEFTGNKETDKVYYRHSNHPGGIKSITAGELRRTNPERLIENSIKGMLPSTRLGEKQGKKLFVYGGAEHPHAAQQPENYELRG</sequence>
<keyword id="KW-0687">Ribonucleoprotein</keyword>
<keyword id="KW-0689">Ribosomal protein</keyword>
<gene>
    <name evidence="1" type="primary">rplM</name>
    <name type="ordered locus">SAUSA300_2172</name>
</gene>
<feature type="chain" id="PRO_1000055476" description="Large ribosomal subunit protein uL13">
    <location>
        <begin position="1"/>
        <end position="145"/>
    </location>
</feature>